<comment type="function">
    <text evidence="1">Catalyzes the reduction of hydroxylamine to form NH(3) and H(2)O.</text>
</comment>
<comment type="catalytic activity">
    <reaction evidence="1">
        <text>A + NH4(+) + H2O = hydroxylamine + AH2 + H(+)</text>
        <dbReference type="Rhea" id="RHEA:22052"/>
        <dbReference type="ChEBI" id="CHEBI:13193"/>
        <dbReference type="ChEBI" id="CHEBI:15377"/>
        <dbReference type="ChEBI" id="CHEBI:15378"/>
        <dbReference type="ChEBI" id="CHEBI:15429"/>
        <dbReference type="ChEBI" id="CHEBI:17499"/>
        <dbReference type="ChEBI" id="CHEBI:28938"/>
        <dbReference type="EC" id="1.7.99.1"/>
    </reaction>
</comment>
<comment type="cofactor">
    <cofactor evidence="1">
        <name>[2Fe-2S] cluster</name>
        <dbReference type="ChEBI" id="CHEBI:190135"/>
    </cofactor>
    <text evidence="1">Binds 1 [2Fe-2S] cluster.</text>
</comment>
<comment type="cofactor">
    <cofactor evidence="1">
        <name>hybrid [4Fe-2O-2S] cluster</name>
        <dbReference type="ChEBI" id="CHEBI:60519"/>
    </cofactor>
    <text evidence="1">Binds 1 hybrid [4Fe-2O-2S] cluster.</text>
</comment>
<comment type="subcellular location">
    <subcellularLocation>
        <location evidence="1">Cytoplasm</location>
    </subcellularLocation>
</comment>
<comment type="similarity">
    <text evidence="1">Belongs to the HCP family.</text>
</comment>
<feature type="chain" id="PRO_1000075118" description="Hydroxylamine reductase">
    <location>
        <begin position="1"/>
        <end position="554"/>
    </location>
</feature>
<feature type="binding site" evidence="1">
    <location>
        <position position="3"/>
    </location>
    <ligand>
        <name>[2Fe-2S] cluster</name>
        <dbReference type="ChEBI" id="CHEBI:190135"/>
    </ligand>
</feature>
<feature type="binding site" evidence="1">
    <location>
        <position position="6"/>
    </location>
    <ligand>
        <name>[2Fe-2S] cluster</name>
        <dbReference type="ChEBI" id="CHEBI:190135"/>
    </ligand>
</feature>
<feature type="binding site" evidence="1">
    <location>
        <position position="18"/>
    </location>
    <ligand>
        <name>[2Fe-2S] cluster</name>
        <dbReference type="ChEBI" id="CHEBI:190135"/>
    </ligand>
</feature>
<feature type="binding site" evidence="1">
    <location>
        <position position="25"/>
    </location>
    <ligand>
        <name>[2Fe-2S] cluster</name>
        <dbReference type="ChEBI" id="CHEBI:190135"/>
    </ligand>
</feature>
<feature type="binding site" evidence="1">
    <location>
        <position position="252"/>
    </location>
    <ligand>
        <name>hybrid [4Fe-2O-2S] cluster</name>
        <dbReference type="ChEBI" id="CHEBI:60519"/>
    </ligand>
</feature>
<feature type="binding site" evidence="1">
    <location>
        <position position="276"/>
    </location>
    <ligand>
        <name>hybrid [4Fe-2O-2S] cluster</name>
        <dbReference type="ChEBI" id="CHEBI:60519"/>
    </ligand>
</feature>
<feature type="binding site" evidence="1">
    <location>
        <position position="320"/>
    </location>
    <ligand>
        <name>hybrid [4Fe-2O-2S] cluster</name>
        <dbReference type="ChEBI" id="CHEBI:60519"/>
    </ligand>
</feature>
<feature type="binding site" description="via persulfide group" evidence="1">
    <location>
        <position position="408"/>
    </location>
    <ligand>
        <name>hybrid [4Fe-2O-2S] cluster</name>
        <dbReference type="ChEBI" id="CHEBI:60519"/>
    </ligand>
</feature>
<feature type="binding site" evidence="1">
    <location>
        <position position="436"/>
    </location>
    <ligand>
        <name>hybrid [4Fe-2O-2S] cluster</name>
        <dbReference type="ChEBI" id="CHEBI:60519"/>
    </ligand>
</feature>
<feature type="binding site" evidence="1">
    <location>
        <position position="461"/>
    </location>
    <ligand>
        <name>hybrid [4Fe-2O-2S] cluster</name>
        <dbReference type="ChEBI" id="CHEBI:60519"/>
    </ligand>
</feature>
<feature type="binding site" evidence="1">
    <location>
        <position position="495"/>
    </location>
    <ligand>
        <name>hybrid [4Fe-2O-2S] cluster</name>
        <dbReference type="ChEBI" id="CHEBI:60519"/>
    </ligand>
</feature>
<feature type="binding site" evidence="1">
    <location>
        <position position="497"/>
    </location>
    <ligand>
        <name>hybrid [4Fe-2O-2S] cluster</name>
        <dbReference type="ChEBI" id="CHEBI:60519"/>
    </ligand>
</feature>
<feature type="modified residue" description="Cysteine persulfide" evidence="1">
    <location>
        <position position="408"/>
    </location>
</feature>
<proteinExistence type="inferred from homology"/>
<gene>
    <name evidence="1" type="primary">hcp</name>
    <name type="ordered locus">Spea_1055</name>
</gene>
<protein>
    <recommendedName>
        <fullName evidence="1">Hydroxylamine reductase</fullName>
        <ecNumber evidence="1">1.7.99.1</ecNumber>
    </recommendedName>
    <alternativeName>
        <fullName evidence="1">Hybrid-cluster protein</fullName>
        <shortName evidence="1">HCP</shortName>
    </alternativeName>
    <alternativeName>
        <fullName evidence="1">Prismane protein</fullName>
    </alternativeName>
</protein>
<evidence type="ECO:0000255" key="1">
    <source>
        <dbReference type="HAMAP-Rule" id="MF_00069"/>
    </source>
</evidence>
<name>HCP_SHEPA</name>
<sequence>MFCIQCEQTIRTPAGNGCSYTQGMCGKSSDTSDLQDLLIYILQGVSSYAALAREVGIIDHEIDTFVPKAFFATLTNVNFDDERIIAYTTQAETFRNRLKAAYEAKCSELNIDAKPMNAPMQLVLGASKPEMLSQALQAVPNRGKDEVHEDIMGLRLLCLYGLKGAAAYMEHARVLDQTSDEVAGEFHEIMAFLGEDSVDADKLFNTAMQIGQLNYRVMAMLDEGETHAFGHPEPTQVNTKSVKGKAILVSGHDMKDLELILEQTQGKGINVYTHGEMLPALAYPELKKYPHLVGNYGSAWQNQQKEFATFPGAVVMTSNCIIDPNVGDYSNRIFTRSIVGWPGVTHIIGDDFSEVIAKAESLEGFIYDEIPHLITIGFARNALMAAAPTVIENVKSGAIKHFFLVGGCDGDKQERGYFTDIATQAPADSVILTLGCGKYKFNKLEFGDINGIPRLLDIGQCNDAYSAIQLAIALSEAFECDINELPLTLVLSWFEQKAIVVLLTLLSLGVKNIMTGPTAPAFLTPNLAKVLEEKFGLRNTTTVEADLNRVLNVA</sequence>
<accession>A8H1E5</accession>
<keyword id="KW-0001">2Fe-2S</keyword>
<keyword id="KW-0963">Cytoplasm</keyword>
<keyword id="KW-0408">Iron</keyword>
<keyword id="KW-0411">Iron-sulfur</keyword>
<keyword id="KW-0479">Metal-binding</keyword>
<keyword id="KW-0560">Oxidoreductase</keyword>
<keyword id="KW-1185">Reference proteome</keyword>
<reference key="1">
    <citation type="submission" date="2007-10" db="EMBL/GenBank/DDBJ databases">
        <title>Complete sequence of Shewanella pealeana ATCC 700345.</title>
        <authorList>
            <consortium name="US DOE Joint Genome Institute"/>
            <person name="Copeland A."/>
            <person name="Lucas S."/>
            <person name="Lapidus A."/>
            <person name="Barry K."/>
            <person name="Glavina del Rio T."/>
            <person name="Dalin E."/>
            <person name="Tice H."/>
            <person name="Pitluck S."/>
            <person name="Chertkov O."/>
            <person name="Brettin T."/>
            <person name="Bruce D."/>
            <person name="Detter J.C."/>
            <person name="Han C."/>
            <person name="Schmutz J."/>
            <person name="Larimer F."/>
            <person name="Land M."/>
            <person name="Hauser L."/>
            <person name="Kyrpides N."/>
            <person name="Kim E."/>
            <person name="Zhao J.-S.Z."/>
            <person name="Manno D."/>
            <person name="Hawari J."/>
            <person name="Richardson P."/>
        </authorList>
    </citation>
    <scope>NUCLEOTIDE SEQUENCE [LARGE SCALE GENOMIC DNA]</scope>
    <source>
        <strain>ATCC 700345 / ANG-SQ1</strain>
    </source>
</reference>
<dbReference type="EC" id="1.7.99.1" evidence="1"/>
<dbReference type="EMBL" id="CP000851">
    <property type="protein sequence ID" value="ABV86382.1"/>
    <property type="molecule type" value="Genomic_DNA"/>
</dbReference>
<dbReference type="RefSeq" id="WP_012154313.1">
    <property type="nucleotide sequence ID" value="NC_009901.1"/>
</dbReference>
<dbReference type="SMR" id="A8H1E5"/>
<dbReference type="STRING" id="398579.Spea_1055"/>
<dbReference type="KEGG" id="spl:Spea_1055"/>
<dbReference type="eggNOG" id="COG1151">
    <property type="taxonomic scope" value="Bacteria"/>
</dbReference>
<dbReference type="HOGENOM" id="CLU_038344_2_0_6"/>
<dbReference type="OrthoDB" id="9761526at2"/>
<dbReference type="Proteomes" id="UP000002608">
    <property type="component" value="Chromosome"/>
</dbReference>
<dbReference type="GO" id="GO:0005737">
    <property type="term" value="C:cytoplasm"/>
    <property type="evidence" value="ECO:0007669"/>
    <property type="project" value="UniProtKB-SubCell"/>
</dbReference>
<dbReference type="GO" id="GO:0051537">
    <property type="term" value="F:2 iron, 2 sulfur cluster binding"/>
    <property type="evidence" value="ECO:0007669"/>
    <property type="project" value="UniProtKB-KW"/>
</dbReference>
<dbReference type="GO" id="GO:0050418">
    <property type="term" value="F:hydroxylamine reductase activity"/>
    <property type="evidence" value="ECO:0007669"/>
    <property type="project" value="UniProtKB-UniRule"/>
</dbReference>
<dbReference type="GO" id="GO:0046872">
    <property type="term" value="F:metal ion binding"/>
    <property type="evidence" value="ECO:0007669"/>
    <property type="project" value="UniProtKB-KW"/>
</dbReference>
<dbReference type="GO" id="GO:0004601">
    <property type="term" value="F:peroxidase activity"/>
    <property type="evidence" value="ECO:0007669"/>
    <property type="project" value="TreeGrafter"/>
</dbReference>
<dbReference type="GO" id="GO:0042542">
    <property type="term" value="P:response to hydrogen peroxide"/>
    <property type="evidence" value="ECO:0007669"/>
    <property type="project" value="TreeGrafter"/>
</dbReference>
<dbReference type="CDD" id="cd01914">
    <property type="entry name" value="HCP"/>
    <property type="match status" value="1"/>
</dbReference>
<dbReference type="FunFam" id="1.20.1270.20:FF:000001">
    <property type="entry name" value="Hydroxylamine reductase"/>
    <property type="match status" value="1"/>
</dbReference>
<dbReference type="FunFam" id="1.20.1270.20:FF:000002">
    <property type="entry name" value="Hydroxylamine reductase"/>
    <property type="match status" value="1"/>
</dbReference>
<dbReference type="FunFam" id="3.40.50.2030:FF:000001">
    <property type="entry name" value="Hydroxylamine reductase"/>
    <property type="match status" value="1"/>
</dbReference>
<dbReference type="FunFam" id="3.40.50.2030:FF:000002">
    <property type="entry name" value="Hydroxylamine reductase"/>
    <property type="match status" value="1"/>
</dbReference>
<dbReference type="Gene3D" id="1.20.1270.20">
    <property type="match status" value="2"/>
</dbReference>
<dbReference type="Gene3D" id="3.40.50.2030">
    <property type="match status" value="2"/>
</dbReference>
<dbReference type="HAMAP" id="MF_00069">
    <property type="entry name" value="Hydroxylam_reduct"/>
    <property type="match status" value="1"/>
</dbReference>
<dbReference type="InterPro" id="IPR004137">
    <property type="entry name" value="HCP/CODH"/>
</dbReference>
<dbReference type="InterPro" id="IPR010048">
    <property type="entry name" value="Hydroxylam_reduct"/>
</dbReference>
<dbReference type="InterPro" id="IPR016099">
    <property type="entry name" value="Prismane-like_a/b-sand"/>
</dbReference>
<dbReference type="InterPro" id="IPR011254">
    <property type="entry name" value="Prismane-like_sf"/>
</dbReference>
<dbReference type="InterPro" id="IPR016100">
    <property type="entry name" value="Prismane_a-bundle"/>
</dbReference>
<dbReference type="NCBIfam" id="TIGR01703">
    <property type="entry name" value="hybrid_clust"/>
    <property type="match status" value="1"/>
</dbReference>
<dbReference type="NCBIfam" id="NF003658">
    <property type="entry name" value="PRK05290.1"/>
    <property type="match status" value="1"/>
</dbReference>
<dbReference type="PANTHER" id="PTHR30109">
    <property type="entry name" value="HYDROXYLAMINE REDUCTASE"/>
    <property type="match status" value="1"/>
</dbReference>
<dbReference type="PANTHER" id="PTHR30109:SF0">
    <property type="entry name" value="HYDROXYLAMINE REDUCTASE"/>
    <property type="match status" value="1"/>
</dbReference>
<dbReference type="Pfam" id="PF03063">
    <property type="entry name" value="Prismane"/>
    <property type="match status" value="1"/>
</dbReference>
<dbReference type="PIRSF" id="PIRSF000076">
    <property type="entry name" value="HCP"/>
    <property type="match status" value="1"/>
</dbReference>
<dbReference type="SUPFAM" id="SSF56821">
    <property type="entry name" value="Prismane protein-like"/>
    <property type="match status" value="1"/>
</dbReference>
<organism>
    <name type="scientific">Shewanella pealeana (strain ATCC 700345 / ANG-SQ1)</name>
    <dbReference type="NCBI Taxonomy" id="398579"/>
    <lineage>
        <taxon>Bacteria</taxon>
        <taxon>Pseudomonadati</taxon>
        <taxon>Pseudomonadota</taxon>
        <taxon>Gammaproteobacteria</taxon>
        <taxon>Alteromonadales</taxon>
        <taxon>Shewanellaceae</taxon>
        <taxon>Shewanella</taxon>
    </lineage>
</organism>